<reference key="1">
    <citation type="submission" date="2006-01" db="EMBL/GenBank/DDBJ databases">
        <title>Complete sequence of Novosphingobium aromaticivorans DSM 12444.</title>
        <authorList>
            <consortium name="US DOE Joint Genome Institute"/>
            <person name="Copeland A."/>
            <person name="Lucas S."/>
            <person name="Lapidus A."/>
            <person name="Barry K."/>
            <person name="Detter J.C."/>
            <person name="Glavina T."/>
            <person name="Hammon N."/>
            <person name="Israni S."/>
            <person name="Pitluck S."/>
            <person name="Chain P."/>
            <person name="Malfatti S."/>
            <person name="Shin M."/>
            <person name="Vergez L."/>
            <person name="Schmutz J."/>
            <person name="Larimer F."/>
            <person name="Land M."/>
            <person name="Kyrpides N."/>
            <person name="Ivanova N."/>
            <person name="Fredrickson J."/>
            <person name="Balkwill D."/>
            <person name="Romine M.F."/>
            <person name="Richardson P."/>
        </authorList>
    </citation>
    <scope>NUCLEOTIDE SEQUENCE [LARGE SCALE GENOMIC DNA]</scope>
    <source>
        <strain>ATCC 700278 / DSM 12444 / CCUG 56034 / CIP 105152 / NBRC 16084 / F199</strain>
    </source>
</reference>
<accession>Q2GBY1</accession>
<name>PYRD_NOVAD</name>
<sequence>MTPYSLLRPLIFRIPAEPAHRLTIKALGLAQGGTTLAPTPSLAQRIAGLAFPNPVGMAPGFDKNAEVPDAMLGLGFGFVEVGTVTPRPQEGNPKPRLFRLVEDRAVINRMGFNNEGAQAVTNRLVRRRETGKHGLPGIVGVNIGANKDSADRIADYALMTRLMAPLASYLTVNISSPNTPGLRALQDEGALAALLDAVIEARGNMTTPVFLKLAPDLEPADIDSICRIAIEKQLAALIISNTTITRPVLRSAHAGEAGGLSGAPLRELALQRLRDFRKASGGAIPLVGVGGIATVDDAWERIRAGASLIQIYSAMVYEGPGLARRLVAGLERKVREAGLTSIAEAVGSE</sequence>
<evidence type="ECO:0000255" key="1">
    <source>
        <dbReference type="HAMAP-Rule" id="MF_00225"/>
    </source>
</evidence>
<gene>
    <name evidence="1" type="primary">pyrD</name>
    <name type="ordered locus">Saro_0193</name>
</gene>
<keyword id="KW-1003">Cell membrane</keyword>
<keyword id="KW-0285">Flavoprotein</keyword>
<keyword id="KW-0288">FMN</keyword>
<keyword id="KW-0472">Membrane</keyword>
<keyword id="KW-0560">Oxidoreductase</keyword>
<keyword id="KW-0665">Pyrimidine biosynthesis</keyword>
<keyword id="KW-1185">Reference proteome</keyword>
<organism>
    <name type="scientific">Novosphingobium aromaticivorans (strain ATCC 700278 / DSM 12444 / CCUG 56034 / CIP 105152 / NBRC 16084 / F199)</name>
    <dbReference type="NCBI Taxonomy" id="279238"/>
    <lineage>
        <taxon>Bacteria</taxon>
        <taxon>Pseudomonadati</taxon>
        <taxon>Pseudomonadota</taxon>
        <taxon>Alphaproteobacteria</taxon>
        <taxon>Sphingomonadales</taxon>
        <taxon>Sphingomonadaceae</taxon>
        <taxon>Novosphingobium</taxon>
    </lineage>
</organism>
<proteinExistence type="inferred from homology"/>
<protein>
    <recommendedName>
        <fullName evidence="1">Dihydroorotate dehydrogenase (quinone)</fullName>
        <ecNumber evidence="1">1.3.5.2</ecNumber>
    </recommendedName>
    <alternativeName>
        <fullName evidence="1">DHOdehase</fullName>
        <shortName evidence="1">DHOD</shortName>
        <shortName evidence="1">DHODase</shortName>
    </alternativeName>
    <alternativeName>
        <fullName evidence="1">Dihydroorotate oxidase</fullName>
    </alternativeName>
</protein>
<dbReference type="EC" id="1.3.5.2" evidence="1"/>
<dbReference type="EMBL" id="CP000248">
    <property type="protein sequence ID" value="ABD24642.1"/>
    <property type="molecule type" value="Genomic_DNA"/>
</dbReference>
<dbReference type="RefSeq" id="WP_011443856.1">
    <property type="nucleotide sequence ID" value="NC_007794.1"/>
</dbReference>
<dbReference type="SMR" id="Q2GBY1"/>
<dbReference type="STRING" id="279238.Saro_0193"/>
<dbReference type="KEGG" id="nar:Saro_0193"/>
<dbReference type="eggNOG" id="COG0167">
    <property type="taxonomic scope" value="Bacteria"/>
</dbReference>
<dbReference type="HOGENOM" id="CLU_013640_2_1_5"/>
<dbReference type="UniPathway" id="UPA00070">
    <property type="reaction ID" value="UER00946"/>
</dbReference>
<dbReference type="Proteomes" id="UP000009134">
    <property type="component" value="Chromosome"/>
</dbReference>
<dbReference type="GO" id="GO:0005737">
    <property type="term" value="C:cytoplasm"/>
    <property type="evidence" value="ECO:0007669"/>
    <property type="project" value="InterPro"/>
</dbReference>
<dbReference type="GO" id="GO:0005886">
    <property type="term" value="C:plasma membrane"/>
    <property type="evidence" value="ECO:0007669"/>
    <property type="project" value="UniProtKB-SubCell"/>
</dbReference>
<dbReference type="GO" id="GO:0106430">
    <property type="term" value="F:dihydroorotate dehydrogenase (quinone) activity"/>
    <property type="evidence" value="ECO:0007669"/>
    <property type="project" value="UniProtKB-EC"/>
</dbReference>
<dbReference type="GO" id="GO:0006207">
    <property type="term" value="P:'de novo' pyrimidine nucleobase biosynthetic process"/>
    <property type="evidence" value="ECO:0007669"/>
    <property type="project" value="InterPro"/>
</dbReference>
<dbReference type="GO" id="GO:0044205">
    <property type="term" value="P:'de novo' UMP biosynthetic process"/>
    <property type="evidence" value="ECO:0007669"/>
    <property type="project" value="UniProtKB-UniRule"/>
</dbReference>
<dbReference type="CDD" id="cd04738">
    <property type="entry name" value="DHOD_2_like"/>
    <property type="match status" value="1"/>
</dbReference>
<dbReference type="Gene3D" id="3.20.20.70">
    <property type="entry name" value="Aldolase class I"/>
    <property type="match status" value="1"/>
</dbReference>
<dbReference type="HAMAP" id="MF_00225">
    <property type="entry name" value="DHO_dh_type2"/>
    <property type="match status" value="1"/>
</dbReference>
<dbReference type="InterPro" id="IPR013785">
    <property type="entry name" value="Aldolase_TIM"/>
</dbReference>
<dbReference type="InterPro" id="IPR050074">
    <property type="entry name" value="DHO_dehydrogenase"/>
</dbReference>
<dbReference type="InterPro" id="IPR012135">
    <property type="entry name" value="Dihydroorotate_DH_1_2"/>
</dbReference>
<dbReference type="InterPro" id="IPR005719">
    <property type="entry name" value="Dihydroorotate_DH_2"/>
</dbReference>
<dbReference type="InterPro" id="IPR005720">
    <property type="entry name" value="Dihydroorotate_DH_cat"/>
</dbReference>
<dbReference type="InterPro" id="IPR001295">
    <property type="entry name" value="Dihydroorotate_DH_CS"/>
</dbReference>
<dbReference type="NCBIfam" id="NF003645">
    <property type="entry name" value="PRK05286.1-2"/>
    <property type="match status" value="1"/>
</dbReference>
<dbReference type="NCBIfam" id="NF003652">
    <property type="entry name" value="PRK05286.2-5"/>
    <property type="match status" value="1"/>
</dbReference>
<dbReference type="NCBIfam" id="TIGR01036">
    <property type="entry name" value="pyrD_sub2"/>
    <property type="match status" value="1"/>
</dbReference>
<dbReference type="PANTHER" id="PTHR48109:SF4">
    <property type="entry name" value="DIHYDROOROTATE DEHYDROGENASE (QUINONE), MITOCHONDRIAL"/>
    <property type="match status" value="1"/>
</dbReference>
<dbReference type="PANTHER" id="PTHR48109">
    <property type="entry name" value="DIHYDROOROTATE DEHYDROGENASE (QUINONE), MITOCHONDRIAL-RELATED"/>
    <property type="match status" value="1"/>
</dbReference>
<dbReference type="Pfam" id="PF01180">
    <property type="entry name" value="DHO_dh"/>
    <property type="match status" value="1"/>
</dbReference>
<dbReference type="PIRSF" id="PIRSF000164">
    <property type="entry name" value="DHO_oxidase"/>
    <property type="match status" value="1"/>
</dbReference>
<dbReference type="SUPFAM" id="SSF51395">
    <property type="entry name" value="FMN-linked oxidoreductases"/>
    <property type="match status" value="1"/>
</dbReference>
<dbReference type="PROSITE" id="PS00911">
    <property type="entry name" value="DHODEHASE_1"/>
    <property type="match status" value="1"/>
</dbReference>
<dbReference type="PROSITE" id="PS00912">
    <property type="entry name" value="DHODEHASE_2"/>
    <property type="match status" value="1"/>
</dbReference>
<feature type="chain" id="PRO_1000071766" description="Dihydroorotate dehydrogenase (quinone)">
    <location>
        <begin position="1"/>
        <end position="349"/>
    </location>
</feature>
<feature type="active site" description="Nucleophile" evidence="1">
    <location>
        <position position="176"/>
    </location>
</feature>
<feature type="binding site" evidence="1">
    <location>
        <begin position="59"/>
        <end position="63"/>
    </location>
    <ligand>
        <name>FMN</name>
        <dbReference type="ChEBI" id="CHEBI:58210"/>
    </ligand>
</feature>
<feature type="binding site" evidence="1">
    <location>
        <position position="63"/>
    </location>
    <ligand>
        <name>substrate</name>
    </ligand>
</feature>
<feature type="binding site" evidence="1">
    <location>
        <position position="83"/>
    </location>
    <ligand>
        <name>FMN</name>
        <dbReference type="ChEBI" id="CHEBI:58210"/>
    </ligand>
</feature>
<feature type="binding site" evidence="1">
    <location>
        <begin position="108"/>
        <end position="112"/>
    </location>
    <ligand>
        <name>substrate</name>
    </ligand>
</feature>
<feature type="binding site" evidence="1">
    <location>
        <position position="142"/>
    </location>
    <ligand>
        <name>FMN</name>
        <dbReference type="ChEBI" id="CHEBI:58210"/>
    </ligand>
</feature>
<feature type="binding site" evidence="1">
    <location>
        <position position="173"/>
    </location>
    <ligand>
        <name>FMN</name>
        <dbReference type="ChEBI" id="CHEBI:58210"/>
    </ligand>
</feature>
<feature type="binding site" evidence="1">
    <location>
        <position position="173"/>
    </location>
    <ligand>
        <name>substrate</name>
    </ligand>
</feature>
<feature type="binding site" evidence="1">
    <location>
        <position position="178"/>
    </location>
    <ligand>
        <name>substrate</name>
    </ligand>
</feature>
<feature type="binding site" evidence="1">
    <location>
        <position position="212"/>
    </location>
    <ligand>
        <name>FMN</name>
        <dbReference type="ChEBI" id="CHEBI:58210"/>
    </ligand>
</feature>
<feature type="binding site" evidence="1">
    <location>
        <position position="240"/>
    </location>
    <ligand>
        <name>FMN</name>
        <dbReference type="ChEBI" id="CHEBI:58210"/>
    </ligand>
</feature>
<feature type="binding site" evidence="1">
    <location>
        <begin position="241"/>
        <end position="242"/>
    </location>
    <ligand>
        <name>substrate</name>
    </ligand>
</feature>
<feature type="binding site" evidence="1">
    <location>
        <position position="262"/>
    </location>
    <ligand>
        <name>FMN</name>
        <dbReference type="ChEBI" id="CHEBI:58210"/>
    </ligand>
</feature>
<feature type="binding site" evidence="1">
    <location>
        <position position="291"/>
    </location>
    <ligand>
        <name>FMN</name>
        <dbReference type="ChEBI" id="CHEBI:58210"/>
    </ligand>
</feature>
<feature type="binding site" evidence="1">
    <location>
        <begin position="312"/>
        <end position="313"/>
    </location>
    <ligand>
        <name>FMN</name>
        <dbReference type="ChEBI" id="CHEBI:58210"/>
    </ligand>
</feature>
<comment type="function">
    <text evidence="1">Catalyzes the conversion of dihydroorotate to orotate with quinone as electron acceptor.</text>
</comment>
<comment type="catalytic activity">
    <reaction evidence="1">
        <text>(S)-dihydroorotate + a quinone = orotate + a quinol</text>
        <dbReference type="Rhea" id="RHEA:30187"/>
        <dbReference type="ChEBI" id="CHEBI:24646"/>
        <dbReference type="ChEBI" id="CHEBI:30839"/>
        <dbReference type="ChEBI" id="CHEBI:30864"/>
        <dbReference type="ChEBI" id="CHEBI:132124"/>
        <dbReference type="EC" id="1.3.5.2"/>
    </reaction>
</comment>
<comment type="cofactor">
    <cofactor evidence="1">
        <name>FMN</name>
        <dbReference type="ChEBI" id="CHEBI:58210"/>
    </cofactor>
    <text evidence="1">Binds 1 FMN per subunit.</text>
</comment>
<comment type="pathway">
    <text evidence="1">Pyrimidine metabolism; UMP biosynthesis via de novo pathway; orotate from (S)-dihydroorotate (quinone route): step 1/1.</text>
</comment>
<comment type="subunit">
    <text evidence="1">Monomer.</text>
</comment>
<comment type="subcellular location">
    <subcellularLocation>
        <location evidence="1">Cell membrane</location>
        <topology evidence="1">Peripheral membrane protein</topology>
    </subcellularLocation>
</comment>
<comment type="similarity">
    <text evidence="1">Belongs to the dihydroorotate dehydrogenase family. Type 2 subfamily.</text>
</comment>